<name>NTF2_SCHPO</name>
<accession>Q10100</accession>
<accession>Q9UTF4</accession>
<dbReference type="EMBL" id="CU329670">
    <property type="protein sequence ID" value="CAA92380.3"/>
    <property type="molecule type" value="Genomic_DNA"/>
</dbReference>
<dbReference type="PIR" id="T38039">
    <property type="entry name" value="T38039"/>
</dbReference>
<dbReference type="RefSeq" id="XP_001713065.1">
    <property type="nucleotide sequence ID" value="XM_001713013.2"/>
</dbReference>
<dbReference type="SMR" id="Q10100"/>
<dbReference type="BioGRID" id="279232">
    <property type="interactions" value="1"/>
</dbReference>
<dbReference type="FunCoup" id="Q10100">
    <property type="interactions" value="787"/>
</dbReference>
<dbReference type="STRING" id="284812.Q10100"/>
<dbReference type="iPTMnet" id="Q10100"/>
<dbReference type="PaxDb" id="4896-SPAC15F9.03c.1"/>
<dbReference type="EnsemblFungi" id="SPAC15F9.03c.1">
    <property type="protein sequence ID" value="SPAC15F9.03c.1:pep"/>
    <property type="gene ID" value="SPAC15F9.03c"/>
</dbReference>
<dbReference type="PomBase" id="SPAC15F9.03c"/>
<dbReference type="VEuPathDB" id="FungiDB:SPAC15F9.03c"/>
<dbReference type="eggNOG" id="KOG2104">
    <property type="taxonomic scope" value="Eukaryota"/>
</dbReference>
<dbReference type="HOGENOM" id="CLU_131642_0_0_1"/>
<dbReference type="InParanoid" id="Q10100"/>
<dbReference type="OMA" id="QFVEYYY"/>
<dbReference type="PhylomeDB" id="Q10100"/>
<dbReference type="PRO" id="PR:Q10100"/>
<dbReference type="Proteomes" id="UP000002485">
    <property type="component" value="Chromosome I"/>
</dbReference>
<dbReference type="GO" id="GO:0005829">
    <property type="term" value="C:cytosol"/>
    <property type="evidence" value="ECO:0007005"/>
    <property type="project" value="PomBase"/>
</dbReference>
<dbReference type="GO" id="GO:0005635">
    <property type="term" value="C:nuclear envelope"/>
    <property type="evidence" value="ECO:0007005"/>
    <property type="project" value="PomBase"/>
</dbReference>
<dbReference type="GO" id="GO:0031965">
    <property type="term" value="C:nuclear membrane"/>
    <property type="evidence" value="ECO:0000266"/>
    <property type="project" value="PomBase"/>
</dbReference>
<dbReference type="GO" id="GO:0044613">
    <property type="term" value="C:nuclear pore central transport channel"/>
    <property type="evidence" value="ECO:0000318"/>
    <property type="project" value="GO_Central"/>
</dbReference>
<dbReference type="GO" id="GO:0005634">
    <property type="term" value="C:nucleus"/>
    <property type="evidence" value="ECO:0007005"/>
    <property type="project" value="PomBase"/>
</dbReference>
<dbReference type="GO" id="GO:0061608">
    <property type="term" value="F:nuclear import signal receptor activity"/>
    <property type="evidence" value="ECO:0000318"/>
    <property type="project" value="GO_Central"/>
</dbReference>
<dbReference type="GO" id="GO:0031267">
    <property type="term" value="F:small GTPase binding"/>
    <property type="evidence" value="ECO:0000266"/>
    <property type="project" value="PomBase"/>
</dbReference>
<dbReference type="GO" id="GO:0006606">
    <property type="term" value="P:protein import into nucleus"/>
    <property type="evidence" value="ECO:0000318"/>
    <property type="project" value="GO_Central"/>
</dbReference>
<dbReference type="CDD" id="cd00780">
    <property type="entry name" value="NTF2"/>
    <property type="match status" value="1"/>
</dbReference>
<dbReference type="FunFam" id="3.10.450.50:FF:000005">
    <property type="entry name" value="Nuclear transport factor 2"/>
    <property type="match status" value="1"/>
</dbReference>
<dbReference type="Gene3D" id="3.10.450.50">
    <property type="match status" value="1"/>
</dbReference>
<dbReference type="InterPro" id="IPR045875">
    <property type="entry name" value="NTF2"/>
</dbReference>
<dbReference type="InterPro" id="IPR032710">
    <property type="entry name" value="NTF2-like_dom_sf"/>
</dbReference>
<dbReference type="InterPro" id="IPR002075">
    <property type="entry name" value="NTF2_dom"/>
</dbReference>
<dbReference type="InterPro" id="IPR018222">
    <property type="entry name" value="Nuclear_transport_factor_2_euk"/>
</dbReference>
<dbReference type="PANTHER" id="PTHR12612">
    <property type="entry name" value="NUCLEAR TRANSPORT FACTOR 2"/>
    <property type="match status" value="1"/>
</dbReference>
<dbReference type="Pfam" id="PF02136">
    <property type="entry name" value="NTF2"/>
    <property type="match status" value="1"/>
</dbReference>
<dbReference type="SUPFAM" id="SSF54427">
    <property type="entry name" value="NTF2-like"/>
    <property type="match status" value="1"/>
</dbReference>
<dbReference type="PROSITE" id="PS50177">
    <property type="entry name" value="NTF2_DOMAIN"/>
    <property type="match status" value="1"/>
</dbReference>
<evidence type="ECO:0000250" key="1"/>
<evidence type="ECO:0000255" key="2">
    <source>
        <dbReference type="PROSITE-ProRule" id="PRU00137"/>
    </source>
</evidence>
<feature type="chain" id="PRO_0000194790" description="Nuclear transport factor 2">
    <location>
        <begin position="1"/>
        <end position="123"/>
    </location>
</feature>
<feature type="domain" description="NTF2" evidence="2">
    <location>
        <begin position="7"/>
        <end position="120"/>
    </location>
</feature>
<organism>
    <name type="scientific">Schizosaccharomyces pombe (strain 972 / ATCC 24843)</name>
    <name type="common">Fission yeast</name>
    <dbReference type="NCBI Taxonomy" id="284812"/>
    <lineage>
        <taxon>Eukaryota</taxon>
        <taxon>Fungi</taxon>
        <taxon>Dikarya</taxon>
        <taxon>Ascomycota</taxon>
        <taxon>Taphrinomycotina</taxon>
        <taxon>Schizosaccharomycetes</taxon>
        <taxon>Schizosaccharomycetales</taxon>
        <taxon>Schizosaccharomycetaceae</taxon>
        <taxon>Schizosaccharomyces</taxon>
    </lineage>
</organism>
<sequence length="123" mass="14078">MADYNALATQFTQFYYQTFDSDRSQLSSLYREESMLSFEGAQLQGTKAIVEKLVSLPFQRVQHRISTLDAQPTGTTGSVIVMVTGELLLDEEQMAQRYSQVFHLVNNNGNYYVLNDLFRLNYG</sequence>
<protein>
    <recommendedName>
        <fullName>Nuclear transport factor 2</fullName>
        <shortName>NTF-2</shortName>
    </recommendedName>
</protein>
<keyword id="KW-0963">Cytoplasm</keyword>
<keyword id="KW-0653">Protein transport</keyword>
<keyword id="KW-1185">Reference proteome</keyword>
<keyword id="KW-0813">Transport</keyword>
<gene>
    <name type="primary">ntf2</name>
    <name type="ORF">SPAC15F9.03c</name>
    <name type="ORF">SPAC1B9.01c</name>
</gene>
<proteinExistence type="inferred from homology"/>
<comment type="function">
    <text evidence="1">Facilitates protein transport into the nucleus. Could be part of a multicomponent system of cytosolic factors that assemble at the pore complex during nuclear import (By similarity).</text>
</comment>
<comment type="subcellular location">
    <subcellularLocation>
        <location evidence="1">Cytoplasm</location>
    </subcellularLocation>
</comment>
<reference key="1">
    <citation type="journal article" date="2002" name="Nature">
        <title>The genome sequence of Schizosaccharomyces pombe.</title>
        <authorList>
            <person name="Wood V."/>
            <person name="Gwilliam R."/>
            <person name="Rajandream M.A."/>
            <person name="Lyne M.H."/>
            <person name="Lyne R."/>
            <person name="Stewart A."/>
            <person name="Sgouros J.G."/>
            <person name="Peat N."/>
            <person name="Hayles J."/>
            <person name="Baker S.G."/>
            <person name="Basham D."/>
            <person name="Bowman S."/>
            <person name="Brooks K."/>
            <person name="Brown D."/>
            <person name="Brown S."/>
            <person name="Chillingworth T."/>
            <person name="Churcher C.M."/>
            <person name="Collins M."/>
            <person name="Connor R."/>
            <person name="Cronin A."/>
            <person name="Davis P."/>
            <person name="Feltwell T."/>
            <person name="Fraser A."/>
            <person name="Gentles S."/>
            <person name="Goble A."/>
            <person name="Hamlin N."/>
            <person name="Harris D.E."/>
            <person name="Hidalgo J."/>
            <person name="Hodgson G."/>
            <person name="Holroyd S."/>
            <person name="Hornsby T."/>
            <person name="Howarth S."/>
            <person name="Huckle E.J."/>
            <person name="Hunt S."/>
            <person name="Jagels K."/>
            <person name="James K.D."/>
            <person name="Jones L."/>
            <person name="Jones M."/>
            <person name="Leather S."/>
            <person name="McDonald S."/>
            <person name="McLean J."/>
            <person name="Mooney P."/>
            <person name="Moule S."/>
            <person name="Mungall K.L."/>
            <person name="Murphy L.D."/>
            <person name="Niblett D."/>
            <person name="Odell C."/>
            <person name="Oliver K."/>
            <person name="O'Neil S."/>
            <person name="Pearson D."/>
            <person name="Quail M.A."/>
            <person name="Rabbinowitsch E."/>
            <person name="Rutherford K.M."/>
            <person name="Rutter S."/>
            <person name="Saunders D."/>
            <person name="Seeger K."/>
            <person name="Sharp S."/>
            <person name="Skelton J."/>
            <person name="Simmonds M.N."/>
            <person name="Squares R."/>
            <person name="Squares S."/>
            <person name="Stevens K."/>
            <person name="Taylor K."/>
            <person name="Taylor R.G."/>
            <person name="Tivey A."/>
            <person name="Walsh S.V."/>
            <person name="Warren T."/>
            <person name="Whitehead S."/>
            <person name="Woodward J.R."/>
            <person name="Volckaert G."/>
            <person name="Aert R."/>
            <person name="Robben J."/>
            <person name="Grymonprez B."/>
            <person name="Weltjens I."/>
            <person name="Vanstreels E."/>
            <person name="Rieger M."/>
            <person name="Schaefer M."/>
            <person name="Mueller-Auer S."/>
            <person name="Gabel C."/>
            <person name="Fuchs M."/>
            <person name="Duesterhoeft A."/>
            <person name="Fritzc C."/>
            <person name="Holzer E."/>
            <person name="Moestl D."/>
            <person name="Hilbert H."/>
            <person name="Borzym K."/>
            <person name="Langer I."/>
            <person name="Beck A."/>
            <person name="Lehrach H."/>
            <person name="Reinhardt R."/>
            <person name="Pohl T.M."/>
            <person name="Eger P."/>
            <person name="Zimmermann W."/>
            <person name="Wedler H."/>
            <person name="Wambutt R."/>
            <person name="Purnelle B."/>
            <person name="Goffeau A."/>
            <person name="Cadieu E."/>
            <person name="Dreano S."/>
            <person name="Gloux S."/>
            <person name="Lelaure V."/>
            <person name="Mottier S."/>
            <person name="Galibert F."/>
            <person name="Aves S.J."/>
            <person name="Xiang Z."/>
            <person name="Hunt C."/>
            <person name="Moore K."/>
            <person name="Hurst S.M."/>
            <person name="Lucas M."/>
            <person name="Rochet M."/>
            <person name="Gaillardin C."/>
            <person name="Tallada V.A."/>
            <person name="Garzon A."/>
            <person name="Thode G."/>
            <person name="Daga R.R."/>
            <person name="Cruzado L."/>
            <person name="Jimenez J."/>
            <person name="Sanchez M."/>
            <person name="del Rey F."/>
            <person name="Benito J."/>
            <person name="Dominguez A."/>
            <person name="Revuelta J.L."/>
            <person name="Moreno S."/>
            <person name="Armstrong J."/>
            <person name="Forsburg S.L."/>
            <person name="Cerutti L."/>
            <person name="Lowe T."/>
            <person name="McCombie W.R."/>
            <person name="Paulsen I."/>
            <person name="Potashkin J."/>
            <person name="Shpakovski G.V."/>
            <person name="Ussery D."/>
            <person name="Barrell B.G."/>
            <person name="Nurse P."/>
        </authorList>
    </citation>
    <scope>NUCLEOTIDE SEQUENCE [LARGE SCALE GENOMIC DNA]</scope>
    <source>
        <strain>972 / ATCC 24843</strain>
    </source>
</reference>